<protein>
    <recommendedName>
        <fullName evidence="1">ATP-dependent Clp protease proteolytic subunit</fullName>
        <ecNumber evidence="1">3.4.21.92</ecNumber>
    </recommendedName>
    <alternativeName>
        <fullName evidence="1">Endopeptidase Clp</fullName>
    </alternativeName>
</protein>
<sequence>MSYSGEQERQAPHMALVPMVVEQTARGERSYDIYSRLLKERIIFLTGQVEDYMANLVVAQMLFLEAENPEKDIYLYINSPGGVITAGMSIYDTMQFIKPDVSTICMGQACSMGAFLLTAGAKGKRICLPNSRVMIHQPLGGFQGQATDIEIHAKEILKVKAKMNELMAKHTGQPLEAIERDTERDRFLSASEAVEYGLVDSVFTNRG</sequence>
<dbReference type="EC" id="3.4.21.92" evidence="1"/>
<dbReference type="EMBL" id="BX950851">
    <property type="protein sequence ID" value="CAG74058.1"/>
    <property type="molecule type" value="Genomic_DNA"/>
</dbReference>
<dbReference type="RefSeq" id="WP_011092742.1">
    <property type="nucleotide sequence ID" value="NC_004547.2"/>
</dbReference>
<dbReference type="SMR" id="Q6D827"/>
<dbReference type="STRING" id="218491.ECA1148"/>
<dbReference type="MEROPS" id="S14.001"/>
<dbReference type="GeneID" id="57207962"/>
<dbReference type="KEGG" id="eca:ECA1148"/>
<dbReference type="PATRIC" id="fig|218491.5.peg.1162"/>
<dbReference type="eggNOG" id="COG0740">
    <property type="taxonomic scope" value="Bacteria"/>
</dbReference>
<dbReference type="HOGENOM" id="CLU_058707_3_2_6"/>
<dbReference type="OrthoDB" id="9802800at2"/>
<dbReference type="Proteomes" id="UP000007966">
    <property type="component" value="Chromosome"/>
</dbReference>
<dbReference type="GO" id="GO:0005737">
    <property type="term" value="C:cytoplasm"/>
    <property type="evidence" value="ECO:0007669"/>
    <property type="project" value="UniProtKB-SubCell"/>
</dbReference>
<dbReference type="GO" id="GO:0009368">
    <property type="term" value="C:endopeptidase Clp complex"/>
    <property type="evidence" value="ECO:0007669"/>
    <property type="project" value="TreeGrafter"/>
</dbReference>
<dbReference type="GO" id="GO:0004176">
    <property type="term" value="F:ATP-dependent peptidase activity"/>
    <property type="evidence" value="ECO:0007669"/>
    <property type="project" value="InterPro"/>
</dbReference>
<dbReference type="GO" id="GO:0051117">
    <property type="term" value="F:ATPase binding"/>
    <property type="evidence" value="ECO:0007669"/>
    <property type="project" value="TreeGrafter"/>
</dbReference>
<dbReference type="GO" id="GO:0004252">
    <property type="term" value="F:serine-type endopeptidase activity"/>
    <property type="evidence" value="ECO:0007669"/>
    <property type="project" value="UniProtKB-UniRule"/>
</dbReference>
<dbReference type="GO" id="GO:0006515">
    <property type="term" value="P:protein quality control for misfolded or incompletely synthesized proteins"/>
    <property type="evidence" value="ECO:0007669"/>
    <property type="project" value="TreeGrafter"/>
</dbReference>
<dbReference type="CDD" id="cd07017">
    <property type="entry name" value="S14_ClpP_2"/>
    <property type="match status" value="1"/>
</dbReference>
<dbReference type="FunFam" id="3.90.226.10:FF:000001">
    <property type="entry name" value="ATP-dependent Clp protease proteolytic subunit"/>
    <property type="match status" value="1"/>
</dbReference>
<dbReference type="Gene3D" id="3.90.226.10">
    <property type="entry name" value="2-enoyl-CoA Hydratase, Chain A, domain 1"/>
    <property type="match status" value="1"/>
</dbReference>
<dbReference type="HAMAP" id="MF_00444">
    <property type="entry name" value="ClpP"/>
    <property type="match status" value="1"/>
</dbReference>
<dbReference type="InterPro" id="IPR001907">
    <property type="entry name" value="ClpP"/>
</dbReference>
<dbReference type="InterPro" id="IPR029045">
    <property type="entry name" value="ClpP/crotonase-like_dom_sf"/>
</dbReference>
<dbReference type="InterPro" id="IPR023562">
    <property type="entry name" value="ClpP/TepA"/>
</dbReference>
<dbReference type="InterPro" id="IPR033135">
    <property type="entry name" value="ClpP_His_AS"/>
</dbReference>
<dbReference type="InterPro" id="IPR018215">
    <property type="entry name" value="ClpP_Ser_AS"/>
</dbReference>
<dbReference type="NCBIfam" id="TIGR00493">
    <property type="entry name" value="clpP"/>
    <property type="match status" value="1"/>
</dbReference>
<dbReference type="NCBIfam" id="NF001368">
    <property type="entry name" value="PRK00277.1"/>
    <property type="match status" value="1"/>
</dbReference>
<dbReference type="NCBIfam" id="NF009205">
    <property type="entry name" value="PRK12553.1"/>
    <property type="match status" value="1"/>
</dbReference>
<dbReference type="PANTHER" id="PTHR10381">
    <property type="entry name" value="ATP-DEPENDENT CLP PROTEASE PROTEOLYTIC SUBUNIT"/>
    <property type="match status" value="1"/>
</dbReference>
<dbReference type="PANTHER" id="PTHR10381:SF70">
    <property type="entry name" value="ATP-DEPENDENT CLP PROTEASE PROTEOLYTIC SUBUNIT"/>
    <property type="match status" value="1"/>
</dbReference>
<dbReference type="Pfam" id="PF00574">
    <property type="entry name" value="CLP_protease"/>
    <property type="match status" value="1"/>
</dbReference>
<dbReference type="PRINTS" id="PR00127">
    <property type="entry name" value="CLPPROTEASEP"/>
</dbReference>
<dbReference type="SUPFAM" id="SSF52096">
    <property type="entry name" value="ClpP/crotonase"/>
    <property type="match status" value="1"/>
</dbReference>
<dbReference type="PROSITE" id="PS00382">
    <property type="entry name" value="CLP_PROTEASE_HIS"/>
    <property type="match status" value="1"/>
</dbReference>
<dbReference type="PROSITE" id="PS00381">
    <property type="entry name" value="CLP_PROTEASE_SER"/>
    <property type="match status" value="1"/>
</dbReference>
<accession>Q6D827</accession>
<gene>
    <name evidence="1" type="primary">clpP</name>
    <name type="ordered locus">ECA1148</name>
</gene>
<organism>
    <name type="scientific">Pectobacterium atrosepticum (strain SCRI 1043 / ATCC BAA-672)</name>
    <name type="common">Erwinia carotovora subsp. atroseptica</name>
    <dbReference type="NCBI Taxonomy" id="218491"/>
    <lineage>
        <taxon>Bacteria</taxon>
        <taxon>Pseudomonadati</taxon>
        <taxon>Pseudomonadota</taxon>
        <taxon>Gammaproteobacteria</taxon>
        <taxon>Enterobacterales</taxon>
        <taxon>Pectobacteriaceae</taxon>
        <taxon>Pectobacterium</taxon>
    </lineage>
</organism>
<comment type="function">
    <text evidence="1">Cleaves peptides in various proteins in a process that requires ATP hydrolysis. Has a chymotrypsin-like activity. Plays a major role in the degradation of misfolded proteins.</text>
</comment>
<comment type="catalytic activity">
    <reaction evidence="1">
        <text>Hydrolysis of proteins to small peptides in the presence of ATP and magnesium. alpha-casein is the usual test substrate. In the absence of ATP, only oligopeptides shorter than five residues are hydrolyzed (such as succinyl-Leu-Tyr-|-NHMec, and Leu-Tyr-Leu-|-Tyr-Trp, in which cleavage of the -Tyr-|-Leu- and -Tyr-|-Trp bonds also occurs).</text>
        <dbReference type="EC" id="3.4.21.92"/>
    </reaction>
</comment>
<comment type="subunit">
    <text evidence="1">Fourteen ClpP subunits assemble into 2 heptameric rings which stack back to back to give a disk-like structure with a central cavity, resembling the structure of eukaryotic proteasomes.</text>
</comment>
<comment type="subcellular location">
    <subcellularLocation>
        <location evidence="1">Cytoplasm</location>
    </subcellularLocation>
</comment>
<comment type="similarity">
    <text evidence="1">Belongs to the peptidase S14 family.</text>
</comment>
<reference key="1">
    <citation type="journal article" date="2004" name="Proc. Natl. Acad. Sci. U.S.A.">
        <title>Genome sequence of the enterobacterial phytopathogen Erwinia carotovora subsp. atroseptica and characterization of virulence factors.</title>
        <authorList>
            <person name="Bell K.S."/>
            <person name="Sebaihia M."/>
            <person name="Pritchard L."/>
            <person name="Holden M.T.G."/>
            <person name="Hyman L.J."/>
            <person name="Holeva M.C."/>
            <person name="Thomson N.R."/>
            <person name="Bentley S.D."/>
            <person name="Churcher L.J.C."/>
            <person name="Mungall K."/>
            <person name="Atkin R."/>
            <person name="Bason N."/>
            <person name="Brooks K."/>
            <person name="Chillingworth T."/>
            <person name="Clark K."/>
            <person name="Doggett J."/>
            <person name="Fraser A."/>
            <person name="Hance Z."/>
            <person name="Hauser H."/>
            <person name="Jagels K."/>
            <person name="Moule S."/>
            <person name="Norbertczak H."/>
            <person name="Ormond D."/>
            <person name="Price C."/>
            <person name="Quail M.A."/>
            <person name="Sanders M."/>
            <person name="Walker D."/>
            <person name="Whitehead S."/>
            <person name="Salmond G.P.C."/>
            <person name="Birch P.R.J."/>
            <person name="Parkhill J."/>
            <person name="Toth I.K."/>
        </authorList>
    </citation>
    <scope>NUCLEOTIDE SEQUENCE [LARGE SCALE GENOMIC DNA]</scope>
    <source>
        <strain>SCRI 1043 / ATCC BAA-672</strain>
    </source>
</reference>
<feature type="chain" id="PRO_0000179557" description="ATP-dependent Clp protease proteolytic subunit">
    <location>
        <begin position="1"/>
        <end position="207"/>
    </location>
</feature>
<feature type="active site" description="Nucleophile" evidence="1">
    <location>
        <position position="111"/>
    </location>
</feature>
<feature type="active site" evidence="1">
    <location>
        <position position="136"/>
    </location>
</feature>
<proteinExistence type="inferred from homology"/>
<name>CLPP_PECAS</name>
<keyword id="KW-0963">Cytoplasm</keyword>
<keyword id="KW-0378">Hydrolase</keyword>
<keyword id="KW-0645">Protease</keyword>
<keyword id="KW-1185">Reference proteome</keyword>
<keyword id="KW-0720">Serine protease</keyword>
<evidence type="ECO:0000255" key="1">
    <source>
        <dbReference type="HAMAP-Rule" id="MF_00444"/>
    </source>
</evidence>